<keyword id="KW-0963">Cytoplasm</keyword>
<keyword id="KW-0413">Isomerase</keyword>
<keyword id="KW-0627">Porphyrin biosynthesis</keyword>
<keyword id="KW-0663">Pyridoxal phosphate</keyword>
<reference key="1">
    <citation type="journal article" date="2008" name="BMC Genomics">
        <title>Genome sequence and rapid evolution of the rice pathogen Xanthomonas oryzae pv. oryzae PXO99A.</title>
        <authorList>
            <person name="Salzberg S.L."/>
            <person name="Sommer D.D."/>
            <person name="Schatz M.C."/>
            <person name="Phillippy A.M."/>
            <person name="Rabinowicz P.D."/>
            <person name="Tsuge S."/>
            <person name="Furutani A."/>
            <person name="Ochiai H."/>
            <person name="Delcher A.L."/>
            <person name="Kelley D."/>
            <person name="Madupu R."/>
            <person name="Puiu D."/>
            <person name="Radune D."/>
            <person name="Shumway M."/>
            <person name="Trapnell C."/>
            <person name="Aparna G."/>
            <person name="Jha G."/>
            <person name="Pandey A."/>
            <person name="Patil P.B."/>
            <person name="Ishihara H."/>
            <person name="Meyer D.F."/>
            <person name="Szurek B."/>
            <person name="Verdier V."/>
            <person name="Koebnik R."/>
            <person name="Dow J.M."/>
            <person name="Ryan R.P."/>
            <person name="Hirata H."/>
            <person name="Tsuyumu S."/>
            <person name="Won Lee S."/>
            <person name="Seo Y.-S."/>
            <person name="Sriariyanum M."/>
            <person name="Ronald P.C."/>
            <person name="Sonti R.V."/>
            <person name="Van Sluys M.-A."/>
            <person name="Leach J.E."/>
            <person name="White F.F."/>
            <person name="Bogdanove A.J."/>
        </authorList>
    </citation>
    <scope>NUCLEOTIDE SEQUENCE [LARGE SCALE GENOMIC DNA]</scope>
    <source>
        <strain>PXO99A</strain>
    </source>
</reference>
<name>GSA_XANOP</name>
<accession>B2SKS0</accession>
<evidence type="ECO:0000255" key="1">
    <source>
        <dbReference type="HAMAP-Rule" id="MF_00375"/>
    </source>
</evidence>
<evidence type="ECO:0000305" key="2"/>
<proteinExistence type="inferred from homology"/>
<protein>
    <recommendedName>
        <fullName evidence="1">Glutamate-1-semialdehyde 2,1-aminomutase</fullName>
        <shortName evidence="1">GSA</shortName>
        <ecNumber evidence="1">5.4.3.8</ecNumber>
    </recommendedName>
    <alternativeName>
        <fullName evidence="1">Glutamate-1-semialdehyde aminotransferase</fullName>
        <shortName evidence="1">GSA-AT</shortName>
    </alternativeName>
</protein>
<organism>
    <name type="scientific">Xanthomonas oryzae pv. oryzae (strain PXO99A)</name>
    <dbReference type="NCBI Taxonomy" id="360094"/>
    <lineage>
        <taxon>Bacteria</taxon>
        <taxon>Pseudomonadati</taxon>
        <taxon>Pseudomonadota</taxon>
        <taxon>Gammaproteobacteria</taxon>
        <taxon>Lysobacterales</taxon>
        <taxon>Lysobacteraceae</taxon>
        <taxon>Xanthomonas</taxon>
    </lineage>
</organism>
<feature type="chain" id="PRO_0000382391" description="Glutamate-1-semialdehyde 2,1-aminomutase">
    <location>
        <begin position="1"/>
        <end position="429"/>
    </location>
</feature>
<feature type="modified residue" description="N6-(pyridoxal phosphate)lysine" evidence="1">
    <location>
        <position position="267"/>
    </location>
</feature>
<comment type="catalytic activity">
    <reaction evidence="1">
        <text>(S)-4-amino-5-oxopentanoate = 5-aminolevulinate</text>
        <dbReference type="Rhea" id="RHEA:14265"/>
        <dbReference type="ChEBI" id="CHEBI:57501"/>
        <dbReference type="ChEBI" id="CHEBI:356416"/>
        <dbReference type="EC" id="5.4.3.8"/>
    </reaction>
</comment>
<comment type="cofactor">
    <cofactor evidence="1">
        <name>pyridoxal 5'-phosphate</name>
        <dbReference type="ChEBI" id="CHEBI:597326"/>
    </cofactor>
</comment>
<comment type="pathway">
    <text evidence="1">Porphyrin-containing compound metabolism; protoporphyrin-IX biosynthesis; 5-aminolevulinate from L-glutamyl-tRNA(Glu): step 2/2.</text>
</comment>
<comment type="subunit">
    <text evidence="1">Homodimer.</text>
</comment>
<comment type="subcellular location">
    <subcellularLocation>
        <location evidence="1">Cytoplasm</location>
    </subcellularLocation>
</comment>
<comment type="similarity">
    <text evidence="1">Belongs to the class-III pyridoxal-phosphate-dependent aminotransferase family. HemL subfamily.</text>
</comment>
<comment type="sequence caution" evidence="2">
    <conflict type="erroneous initiation">
        <sequence resource="EMBL-CDS" id="ACD60578"/>
    </conflict>
</comment>
<sequence length="429" mass="44904">MNHSRSHALFAQAQTVLPGGVNSPVRAFKSVGGEPFFVARADGSYLFDVDGNRYIDYVGSWGPMIAGHNHPAVREAVERAIRDGLSFGAPCAAEVTMAETITGLVPSCEMVRMVNSGTEATLSAVRLARGATGRNRIIKFEGCYHGHGDSFLVKAGSGMLTLGVPTSPGVPAGLSELTATLSFNDFEGATALFDEIGPEVAAVIIEPVVGNANCIPPQAGYLQHLRTLCTRHGALLIFDEVMTGFRVALGGAQAHYGVTPDLSTFGKIIGGGMPVGAYGGRRDLMEQIAPAGPIYQAGTLSGNPVAMAAGLAMLELVQEPGFHMRLSEATSTLCEGLKDAARAAGIAVTTNQVGGMFGLFFTDDIVESYAQATACDITSFNRFFHAMLQRGVYLAPSAYEAGFMSSAHDATVIEATLAAARDAFADVAR</sequence>
<dbReference type="EC" id="5.4.3.8" evidence="1"/>
<dbReference type="EMBL" id="CP000967">
    <property type="protein sequence ID" value="ACD60578.1"/>
    <property type="status" value="ALT_INIT"/>
    <property type="molecule type" value="Genomic_DNA"/>
</dbReference>
<dbReference type="RefSeq" id="WP_027703881.1">
    <property type="nucleotide sequence ID" value="NC_010717.2"/>
</dbReference>
<dbReference type="SMR" id="B2SKS0"/>
<dbReference type="KEGG" id="xop:PXO_02277"/>
<dbReference type="eggNOG" id="COG0001">
    <property type="taxonomic scope" value="Bacteria"/>
</dbReference>
<dbReference type="HOGENOM" id="CLU_016922_1_5_6"/>
<dbReference type="UniPathway" id="UPA00251">
    <property type="reaction ID" value="UER00317"/>
</dbReference>
<dbReference type="Proteomes" id="UP000001740">
    <property type="component" value="Chromosome"/>
</dbReference>
<dbReference type="GO" id="GO:0005737">
    <property type="term" value="C:cytoplasm"/>
    <property type="evidence" value="ECO:0007669"/>
    <property type="project" value="UniProtKB-SubCell"/>
</dbReference>
<dbReference type="GO" id="GO:0042286">
    <property type="term" value="F:glutamate-1-semialdehyde 2,1-aminomutase activity"/>
    <property type="evidence" value="ECO:0007669"/>
    <property type="project" value="UniProtKB-UniRule"/>
</dbReference>
<dbReference type="GO" id="GO:0030170">
    <property type="term" value="F:pyridoxal phosphate binding"/>
    <property type="evidence" value="ECO:0007669"/>
    <property type="project" value="InterPro"/>
</dbReference>
<dbReference type="GO" id="GO:0008483">
    <property type="term" value="F:transaminase activity"/>
    <property type="evidence" value="ECO:0007669"/>
    <property type="project" value="InterPro"/>
</dbReference>
<dbReference type="GO" id="GO:0006782">
    <property type="term" value="P:protoporphyrinogen IX biosynthetic process"/>
    <property type="evidence" value="ECO:0007669"/>
    <property type="project" value="UniProtKB-UniRule"/>
</dbReference>
<dbReference type="CDD" id="cd00610">
    <property type="entry name" value="OAT_like"/>
    <property type="match status" value="1"/>
</dbReference>
<dbReference type="FunFam" id="3.40.640.10:FF:000021">
    <property type="entry name" value="Glutamate-1-semialdehyde 2,1-aminomutase"/>
    <property type="match status" value="1"/>
</dbReference>
<dbReference type="Gene3D" id="3.90.1150.10">
    <property type="entry name" value="Aspartate Aminotransferase, domain 1"/>
    <property type="match status" value="1"/>
</dbReference>
<dbReference type="Gene3D" id="3.40.640.10">
    <property type="entry name" value="Type I PLP-dependent aspartate aminotransferase-like (Major domain)"/>
    <property type="match status" value="1"/>
</dbReference>
<dbReference type="HAMAP" id="MF_00375">
    <property type="entry name" value="HemL_aminotrans_3"/>
    <property type="match status" value="1"/>
</dbReference>
<dbReference type="InterPro" id="IPR004639">
    <property type="entry name" value="4pyrrol_synth_GluAld_NH2Trfase"/>
</dbReference>
<dbReference type="InterPro" id="IPR005814">
    <property type="entry name" value="Aminotrans_3"/>
</dbReference>
<dbReference type="InterPro" id="IPR049704">
    <property type="entry name" value="Aminotrans_3_PPA_site"/>
</dbReference>
<dbReference type="InterPro" id="IPR015424">
    <property type="entry name" value="PyrdxlP-dep_Trfase"/>
</dbReference>
<dbReference type="InterPro" id="IPR015421">
    <property type="entry name" value="PyrdxlP-dep_Trfase_major"/>
</dbReference>
<dbReference type="InterPro" id="IPR015422">
    <property type="entry name" value="PyrdxlP-dep_Trfase_small"/>
</dbReference>
<dbReference type="NCBIfam" id="TIGR00713">
    <property type="entry name" value="hemL"/>
    <property type="match status" value="1"/>
</dbReference>
<dbReference type="NCBIfam" id="NF000818">
    <property type="entry name" value="PRK00062.1"/>
    <property type="match status" value="1"/>
</dbReference>
<dbReference type="PANTHER" id="PTHR43713">
    <property type="entry name" value="GLUTAMATE-1-SEMIALDEHYDE 2,1-AMINOMUTASE"/>
    <property type="match status" value="1"/>
</dbReference>
<dbReference type="PANTHER" id="PTHR43713:SF3">
    <property type="entry name" value="GLUTAMATE-1-SEMIALDEHYDE 2,1-AMINOMUTASE 1, CHLOROPLASTIC-RELATED"/>
    <property type="match status" value="1"/>
</dbReference>
<dbReference type="Pfam" id="PF00202">
    <property type="entry name" value="Aminotran_3"/>
    <property type="match status" value="1"/>
</dbReference>
<dbReference type="SUPFAM" id="SSF53383">
    <property type="entry name" value="PLP-dependent transferases"/>
    <property type="match status" value="1"/>
</dbReference>
<dbReference type="PROSITE" id="PS00600">
    <property type="entry name" value="AA_TRANSFER_CLASS_3"/>
    <property type="match status" value="1"/>
</dbReference>
<gene>
    <name evidence="1" type="primary">hemL</name>
    <name type="ordered locus">PXO_02277</name>
</gene>